<gene>
    <name type="primary">GSTM2</name>
</gene>
<keyword id="KW-0963">Cytoplasm</keyword>
<keyword id="KW-0443">Lipid metabolism</keyword>
<keyword id="KW-0597">Phosphoprotein</keyword>
<keyword id="KW-0808">Transferase</keyword>
<evidence type="ECO:0000250" key="1"/>
<evidence type="ECO:0000250" key="2">
    <source>
        <dbReference type="UniProtKB" id="P08010"/>
    </source>
</evidence>
<evidence type="ECO:0000250" key="3">
    <source>
        <dbReference type="UniProtKB" id="P28161"/>
    </source>
</evidence>
<evidence type="ECO:0000250" key="4">
    <source>
        <dbReference type="UniProtKB" id="Q9TSM4"/>
    </source>
</evidence>
<evidence type="ECO:0000305" key="5"/>
<accession>Q9BEB0</accession>
<protein>
    <recommendedName>
        <fullName evidence="5">Glutathione S-transferase Mu 2</fullName>
        <ecNumber evidence="3">2.5.1.18</ecNumber>
    </recommendedName>
    <alternativeName>
        <fullName>GST class-mu 2</fullName>
    </alternativeName>
    <alternativeName>
        <fullName>GSTM2-2</fullName>
    </alternativeName>
</protein>
<feature type="chain" id="PRO_0000185820" description="Glutathione S-transferase Mu 2">
    <location>
        <begin position="1"/>
        <end position="218"/>
    </location>
</feature>
<feature type="domain" description="GST N-terminal">
    <location>
        <begin position="2"/>
        <end position="88"/>
    </location>
</feature>
<feature type="domain" description="GST C-terminal">
    <location>
        <begin position="90"/>
        <end position="208"/>
    </location>
</feature>
<feature type="binding site" evidence="2">
    <location>
        <begin position="7"/>
        <end position="8"/>
    </location>
    <ligand>
        <name>glutathione</name>
        <dbReference type="ChEBI" id="CHEBI:57925"/>
    </ligand>
</feature>
<feature type="binding site" evidence="2">
    <location>
        <begin position="43"/>
        <end position="46"/>
    </location>
    <ligand>
        <name>glutathione</name>
        <dbReference type="ChEBI" id="CHEBI:57925"/>
    </ligand>
</feature>
<feature type="binding site" evidence="2">
    <location>
        <position position="50"/>
    </location>
    <ligand>
        <name>glutathione</name>
        <dbReference type="ChEBI" id="CHEBI:57925"/>
    </ligand>
</feature>
<feature type="binding site" evidence="2">
    <location>
        <begin position="59"/>
        <end position="60"/>
    </location>
    <ligand>
        <name>glutathione</name>
        <dbReference type="ChEBI" id="CHEBI:57925"/>
    </ligand>
</feature>
<feature type="binding site" evidence="2">
    <location>
        <begin position="72"/>
        <end position="73"/>
    </location>
    <ligand>
        <name>glutathione</name>
        <dbReference type="ChEBI" id="CHEBI:57925"/>
    </ligand>
</feature>
<feature type="binding site" evidence="1">
    <location>
        <position position="116"/>
    </location>
    <ligand>
        <name>substrate</name>
    </ligand>
</feature>
<feature type="site" description="Important for substrate specificity" evidence="1">
    <location>
        <position position="210"/>
    </location>
</feature>
<feature type="modified residue" description="Phosphoserine" evidence="2">
    <location>
        <position position="27"/>
    </location>
</feature>
<feature type="modified residue" description="Phosphoserine" evidence="2">
    <location>
        <position position="44"/>
    </location>
</feature>
<dbReference type="EC" id="2.5.1.18" evidence="3"/>
<dbReference type="EMBL" id="AB025799">
    <property type="protein sequence ID" value="BAB40442.1"/>
    <property type="molecule type" value="mRNA"/>
</dbReference>
<dbReference type="SMR" id="Q9BEB0"/>
<dbReference type="GO" id="GO:0005737">
    <property type="term" value="C:cytoplasm"/>
    <property type="evidence" value="ECO:0007669"/>
    <property type="project" value="UniProtKB-SubCell"/>
</dbReference>
<dbReference type="GO" id="GO:0045171">
    <property type="term" value="C:intercellular bridge"/>
    <property type="evidence" value="ECO:0007669"/>
    <property type="project" value="UniProtKB-ARBA"/>
</dbReference>
<dbReference type="GO" id="GO:0004364">
    <property type="term" value="F:glutathione transferase activity"/>
    <property type="evidence" value="ECO:0000250"/>
    <property type="project" value="UniProtKB"/>
</dbReference>
<dbReference type="GO" id="GO:0006749">
    <property type="term" value="P:glutathione metabolic process"/>
    <property type="evidence" value="ECO:0000250"/>
    <property type="project" value="UniProtKB"/>
</dbReference>
<dbReference type="GO" id="GO:0051122">
    <property type="term" value="P:hepoxilin biosynthetic process"/>
    <property type="evidence" value="ECO:0000250"/>
    <property type="project" value="UniProtKB"/>
</dbReference>
<dbReference type="CDD" id="cd03209">
    <property type="entry name" value="GST_C_Mu"/>
    <property type="match status" value="1"/>
</dbReference>
<dbReference type="CDD" id="cd03075">
    <property type="entry name" value="GST_N_Mu"/>
    <property type="match status" value="1"/>
</dbReference>
<dbReference type="FunFam" id="1.20.1050.10:FF:000083">
    <property type="entry name" value="Glutathione S-transferase Mu 1"/>
    <property type="match status" value="1"/>
</dbReference>
<dbReference type="FunFam" id="3.40.30.10:FF:000603">
    <property type="entry name" value="Glutathione S-transferase Mu 1"/>
    <property type="match status" value="1"/>
</dbReference>
<dbReference type="Gene3D" id="1.20.1050.10">
    <property type="match status" value="1"/>
</dbReference>
<dbReference type="Gene3D" id="3.40.30.10">
    <property type="entry name" value="Glutaredoxin"/>
    <property type="match status" value="1"/>
</dbReference>
<dbReference type="InterPro" id="IPR010987">
    <property type="entry name" value="Glutathione-S-Trfase_C-like"/>
</dbReference>
<dbReference type="InterPro" id="IPR036282">
    <property type="entry name" value="Glutathione-S-Trfase_C_sf"/>
</dbReference>
<dbReference type="InterPro" id="IPR004045">
    <property type="entry name" value="Glutathione_S-Trfase_N"/>
</dbReference>
<dbReference type="InterPro" id="IPR004046">
    <property type="entry name" value="GST_C"/>
</dbReference>
<dbReference type="InterPro" id="IPR003081">
    <property type="entry name" value="GST_mu"/>
</dbReference>
<dbReference type="InterPro" id="IPR050213">
    <property type="entry name" value="GST_superfamily"/>
</dbReference>
<dbReference type="InterPro" id="IPR036249">
    <property type="entry name" value="Thioredoxin-like_sf"/>
</dbReference>
<dbReference type="PANTHER" id="PTHR11571">
    <property type="entry name" value="GLUTATHIONE S-TRANSFERASE"/>
    <property type="match status" value="1"/>
</dbReference>
<dbReference type="PANTHER" id="PTHR11571:SF254">
    <property type="entry name" value="GLUTATHIONE S-TRANSFERASE MU 2"/>
    <property type="match status" value="1"/>
</dbReference>
<dbReference type="Pfam" id="PF00043">
    <property type="entry name" value="GST_C"/>
    <property type="match status" value="1"/>
</dbReference>
<dbReference type="Pfam" id="PF02798">
    <property type="entry name" value="GST_N"/>
    <property type="match status" value="1"/>
</dbReference>
<dbReference type="PRINTS" id="PR01267">
    <property type="entry name" value="GSTRNSFRASEM"/>
</dbReference>
<dbReference type="SFLD" id="SFLDG01205">
    <property type="entry name" value="AMPS.1"/>
    <property type="match status" value="1"/>
</dbReference>
<dbReference type="SFLD" id="SFLDG00363">
    <property type="entry name" value="AMPS_(cytGST):_Alpha-__Mu-__Pi"/>
    <property type="match status" value="1"/>
</dbReference>
<dbReference type="SUPFAM" id="SSF47616">
    <property type="entry name" value="GST C-terminal domain-like"/>
    <property type="match status" value="1"/>
</dbReference>
<dbReference type="SUPFAM" id="SSF52833">
    <property type="entry name" value="Thioredoxin-like"/>
    <property type="match status" value="1"/>
</dbReference>
<dbReference type="PROSITE" id="PS50405">
    <property type="entry name" value="GST_CTER"/>
    <property type="match status" value="1"/>
</dbReference>
<dbReference type="PROSITE" id="PS50404">
    <property type="entry name" value="GST_NTER"/>
    <property type="match status" value="1"/>
</dbReference>
<organism>
    <name type="scientific">Macaca fuscata fuscata</name>
    <name type="common">Japanese macaque</name>
    <dbReference type="NCBI Taxonomy" id="9543"/>
    <lineage>
        <taxon>Eukaryota</taxon>
        <taxon>Metazoa</taxon>
        <taxon>Chordata</taxon>
        <taxon>Craniata</taxon>
        <taxon>Vertebrata</taxon>
        <taxon>Euteleostomi</taxon>
        <taxon>Mammalia</taxon>
        <taxon>Eutheria</taxon>
        <taxon>Euarchontoglires</taxon>
        <taxon>Primates</taxon>
        <taxon>Haplorrhini</taxon>
        <taxon>Catarrhini</taxon>
        <taxon>Cercopithecidae</taxon>
        <taxon>Cercopithecinae</taxon>
        <taxon>Macaca</taxon>
    </lineage>
</organism>
<reference key="1">
    <citation type="submission" date="1999-04" db="EMBL/GenBank/DDBJ databases">
        <title>Macaca fuscata glutathione transferase M2.</title>
        <authorList>
            <person name="Beuckmann C.T."/>
            <person name="Fujimori K."/>
            <person name="Urade Y."/>
        </authorList>
    </citation>
    <scope>NUCLEOTIDE SEQUENCE [MRNA]</scope>
</reference>
<name>GSTM2_MACFU</name>
<comment type="function">
    <text evidence="3 4">Conjugation of reduced glutathione to a wide number of exogenous and endogenous hydrophobic electrophiles. Participates in the formation of novel hepoxilin regioisomers (By similarity). Has activity toward aflatoxin B(1)-8,9-epoxide (AFBO) (By similarity).</text>
</comment>
<comment type="catalytic activity">
    <reaction evidence="3">
        <text>RX + glutathione = an S-substituted glutathione + a halide anion + H(+)</text>
        <dbReference type="Rhea" id="RHEA:16437"/>
        <dbReference type="ChEBI" id="CHEBI:15378"/>
        <dbReference type="ChEBI" id="CHEBI:16042"/>
        <dbReference type="ChEBI" id="CHEBI:17792"/>
        <dbReference type="ChEBI" id="CHEBI:57925"/>
        <dbReference type="ChEBI" id="CHEBI:90779"/>
        <dbReference type="EC" id="2.5.1.18"/>
    </reaction>
    <physiologicalReaction direction="left-to-right" evidence="3">
        <dbReference type="Rhea" id="RHEA:16438"/>
    </physiologicalReaction>
</comment>
<comment type="catalytic activity">
    <reaction evidence="3">
        <text>11(S)-hydroxy-14(S),15(S)-epoxy-(5Z,8Z,12E)-eicosatrienoate + glutathione = (11S,15S)-dihydroxy-14(R)-S-glutathionyl-(5Z,8Z,12E)-eicosatrienoate</text>
        <dbReference type="Rhea" id="RHEA:50260"/>
        <dbReference type="ChEBI" id="CHEBI:57925"/>
        <dbReference type="ChEBI" id="CHEBI:132200"/>
        <dbReference type="ChEBI" id="CHEBI:132201"/>
    </reaction>
    <physiologicalReaction direction="left-to-right" evidence="3">
        <dbReference type="Rhea" id="RHEA:50261"/>
    </physiologicalReaction>
</comment>
<comment type="subunit">
    <text evidence="1">Homodimer.</text>
</comment>
<comment type="subcellular location">
    <subcellularLocation>
        <location>Cytoplasm</location>
    </subcellularLocation>
</comment>
<comment type="similarity">
    <text evidence="5">Belongs to the GST superfamily. Mu family.</text>
</comment>
<sequence>MPMTLGYWNIRGLAHSIRLLLEYTGSSYEEKKYTMGDAPDYDRSQWLNEKFKLGLDFPNLPYLIDGTHKITQSNAILRYIARKHNLCGETEKEKIREDILENQLMDNRMQLARLCYDPDFEKLKPEYLEGLPEMLKLYSQFLGKQPWFLGDKITFVDFIAYDVLERNQVFEPSCLDAFPNLKDFISRFEGLEKISAYMKSSRFLPRPVFTKMAVWGNK</sequence>
<proteinExistence type="evidence at transcript level"/>